<dbReference type="EMBL" id="CR761353">
    <property type="protein sequence ID" value="CAJ81361.1"/>
    <property type="molecule type" value="mRNA"/>
</dbReference>
<dbReference type="RefSeq" id="NP_001037934.1">
    <property type="nucleotide sequence ID" value="NM_001044469.1"/>
</dbReference>
<dbReference type="SMR" id="Q28GK6"/>
<dbReference type="FunCoup" id="Q28GK6">
    <property type="interactions" value="2601"/>
</dbReference>
<dbReference type="STRING" id="8364.ENSXETP00000043237"/>
<dbReference type="PaxDb" id="8364-ENSXETP00000040136"/>
<dbReference type="GeneID" id="733555"/>
<dbReference type="KEGG" id="xtr:733555"/>
<dbReference type="AGR" id="Xenbase:XB-GENE-953946"/>
<dbReference type="CTD" id="26271"/>
<dbReference type="Xenbase" id="XB-GENE-953946">
    <property type="gene designation" value="fbxo5"/>
</dbReference>
<dbReference type="eggNOG" id="ENOG502QPWN">
    <property type="taxonomic scope" value="Eukaryota"/>
</dbReference>
<dbReference type="InParanoid" id="Q28GK6"/>
<dbReference type="OMA" id="QHAICQE"/>
<dbReference type="OrthoDB" id="9984940at2759"/>
<dbReference type="UniPathway" id="UPA00143"/>
<dbReference type="Proteomes" id="UP000008143">
    <property type="component" value="Chromosome 5"/>
</dbReference>
<dbReference type="GO" id="GO:0005813">
    <property type="term" value="C:centrosome"/>
    <property type="evidence" value="ECO:0007669"/>
    <property type="project" value="UniProtKB-SubCell"/>
</dbReference>
<dbReference type="GO" id="GO:0005737">
    <property type="term" value="C:cytoplasm"/>
    <property type="evidence" value="ECO:0000250"/>
    <property type="project" value="UniProtKB"/>
</dbReference>
<dbReference type="GO" id="GO:0005634">
    <property type="term" value="C:nucleus"/>
    <property type="evidence" value="ECO:0000250"/>
    <property type="project" value="UniProtKB"/>
</dbReference>
<dbReference type="GO" id="GO:0005819">
    <property type="term" value="C:spindle"/>
    <property type="evidence" value="ECO:0000250"/>
    <property type="project" value="UniProtKB"/>
</dbReference>
<dbReference type="GO" id="GO:1990948">
    <property type="term" value="F:ubiquitin ligase inhibitor activity"/>
    <property type="evidence" value="ECO:0000250"/>
    <property type="project" value="UniProtKB"/>
</dbReference>
<dbReference type="GO" id="GO:0008270">
    <property type="term" value="F:zinc ion binding"/>
    <property type="evidence" value="ECO:0007669"/>
    <property type="project" value="UniProtKB-KW"/>
</dbReference>
<dbReference type="GO" id="GO:0051301">
    <property type="term" value="P:cell division"/>
    <property type="evidence" value="ECO:0007669"/>
    <property type="project" value="UniProtKB-KW"/>
</dbReference>
<dbReference type="GO" id="GO:0106061">
    <property type="term" value="P:negative regulation of exit from meiosis"/>
    <property type="evidence" value="ECO:0000250"/>
    <property type="project" value="UniProtKB"/>
</dbReference>
<dbReference type="GO" id="GO:0045835">
    <property type="term" value="P:negative regulation of meiotic nuclear division"/>
    <property type="evidence" value="ECO:0007669"/>
    <property type="project" value="InterPro"/>
</dbReference>
<dbReference type="GO" id="GO:0045841">
    <property type="term" value="P:negative regulation of mitotic metaphase/anaphase transition"/>
    <property type="evidence" value="ECO:0000250"/>
    <property type="project" value="UniProtKB"/>
</dbReference>
<dbReference type="GO" id="GO:1904667">
    <property type="term" value="P:negative regulation of ubiquitin protein ligase activity"/>
    <property type="evidence" value="ECO:0000250"/>
    <property type="project" value="UniProtKB"/>
</dbReference>
<dbReference type="GO" id="GO:0008284">
    <property type="term" value="P:positive regulation of cell population proliferation"/>
    <property type="evidence" value="ECO:0000250"/>
    <property type="project" value="UniProtKB"/>
</dbReference>
<dbReference type="GO" id="GO:0016567">
    <property type="term" value="P:protein ubiquitination"/>
    <property type="evidence" value="ECO:0007669"/>
    <property type="project" value="UniProtKB-UniPathway"/>
</dbReference>
<dbReference type="GO" id="GO:0051726">
    <property type="term" value="P:regulation of cell cycle"/>
    <property type="evidence" value="ECO:0000250"/>
    <property type="project" value="UniProtKB"/>
</dbReference>
<dbReference type="GO" id="GO:0006275">
    <property type="term" value="P:regulation of DNA replication"/>
    <property type="evidence" value="ECO:0000250"/>
    <property type="project" value="UniProtKB"/>
</dbReference>
<dbReference type="CDD" id="cd20364">
    <property type="entry name" value="BRcat_RBR_FBXO5"/>
    <property type="match status" value="1"/>
</dbReference>
<dbReference type="CDD" id="cd22170">
    <property type="entry name" value="F-box_FBXO5"/>
    <property type="match status" value="1"/>
</dbReference>
<dbReference type="FunFam" id="2.20.25.20:FF:000006">
    <property type="entry name" value="F-box only protein 5"/>
    <property type="match status" value="1"/>
</dbReference>
<dbReference type="Gene3D" id="2.20.25.20">
    <property type="match status" value="1"/>
</dbReference>
<dbReference type="InterPro" id="IPR036047">
    <property type="entry name" value="F-box-like_dom_sf"/>
</dbReference>
<dbReference type="InterPro" id="IPR001810">
    <property type="entry name" value="F-box_dom"/>
</dbReference>
<dbReference type="InterPro" id="IPR047147">
    <property type="entry name" value="FBX5_43"/>
</dbReference>
<dbReference type="InterPro" id="IPR044064">
    <property type="entry name" value="ZF_ZBR"/>
</dbReference>
<dbReference type="PANTHER" id="PTHR15493:SF8">
    <property type="entry name" value="F-BOX ONLY PROTEIN 5"/>
    <property type="match status" value="1"/>
</dbReference>
<dbReference type="PANTHER" id="PTHR15493">
    <property type="entry name" value="F-BOX ONLY PROTEIN 5 AND 43"/>
    <property type="match status" value="1"/>
</dbReference>
<dbReference type="Pfam" id="PF00646">
    <property type="entry name" value="F-box"/>
    <property type="match status" value="1"/>
</dbReference>
<dbReference type="SUPFAM" id="SSF81383">
    <property type="entry name" value="F-box domain"/>
    <property type="match status" value="1"/>
</dbReference>
<dbReference type="PROSITE" id="PS51872">
    <property type="entry name" value="ZF_ZBR"/>
    <property type="match status" value="1"/>
</dbReference>
<accession>Q28GK6</accession>
<reference evidence="7" key="1">
    <citation type="submission" date="2006-06" db="EMBL/GenBank/DDBJ databases">
        <authorList>
            <consortium name="Sanger Xenopus tropicalis EST/cDNA project"/>
        </authorList>
    </citation>
    <scope>NUCLEOTIDE SEQUENCE [LARGE SCALE MRNA]</scope>
    <source>
        <tissue>Egg</tissue>
    </source>
</reference>
<name>FBX5_XENTR</name>
<feature type="chain" id="PRO_0000258012" description="F-box only protein 5">
    <location>
        <begin position="1"/>
        <end position="391"/>
    </location>
</feature>
<feature type="domain" description="F-box" evidence="3">
    <location>
        <begin position="198"/>
        <end position="245"/>
    </location>
</feature>
<feature type="zinc finger region" description="ZBR-type" evidence="4">
    <location>
        <begin position="318"/>
        <end position="366"/>
    </location>
</feature>
<feature type="region of interest" description="Disordered" evidence="5">
    <location>
        <begin position="365"/>
        <end position="391"/>
    </location>
</feature>
<feature type="compositionally biased region" description="Basic residues" evidence="5">
    <location>
        <begin position="382"/>
        <end position="391"/>
    </location>
</feature>
<feature type="binding site" evidence="4">
    <location>
        <position position="322"/>
    </location>
    <ligand>
        <name>Zn(2+)</name>
        <dbReference type="ChEBI" id="CHEBI:29105"/>
        <label>1</label>
    </ligand>
</feature>
<feature type="binding site" evidence="4">
    <location>
        <position position="325"/>
    </location>
    <ligand>
        <name>Zn(2+)</name>
        <dbReference type="ChEBI" id="CHEBI:29105"/>
        <label>1</label>
    </ligand>
</feature>
<feature type="binding site" evidence="4">
    <location>
        <position position="340"/>
    </location>
    <ligand>
        <name>Zn(2+)</name>
        <dbReference type="ChEBI" id="CHEBI:29105"/>
        <label>1</label>
    </ligand>
</feature>
<feature type="binding site" evidence="4">
    <location>
        <position position="345"/>
    </location>
    <ligand>
        <name>Zn(2+)</name>
        <dbReference type="ChEBI" id="CHEBI:29105"/>
        <label>1</label>
    </ligand>
</feature>
<feature type="binding site" evidence="4">
    <location>
        <position position="350"/>
    </location>
    <ligand>
        <name>Zn(2+)</name>
        <dbReference type="ChEBI" id="CHEBI:29105"/>
        <label>2</label>
    </ligand>
</feature>
<feature type="binding site" evidence="4">
    <location>
        <position position="353"/>
    </location>
    <ligand>
        <name>Zn(2+)</name>
        <dbReference type="ChEBI" id="CHEBI:29105"/>
        <label>2</label>
    </ligand>
</feature>
<feature type="binding site" evidence="4">
    <location>
        <position position="358"/>
    </location>
    <ligand>
        <name>Zn(2+)</name>
        <dbReference type="ChEBI" id="CHEBI:29105"/>
        <label>2</label>
    </ligand>
</feature>
<feature type="binding site" evidence="4">
    <location>
        <position position="363"/>
    </location>
    <ligand>
        <name>Zn(2+)</name>
        <dbReference type="ChEBI" id="CHEBI:29105"/>
        <label>2</label>
    </ligand>
</feature>
<comment type="function">
    <text evidence="1">Regulates progression through early mitosis by inhibiting the anaphase promoting complex/cyclosome (APC). Binds to the APC activators cdc20 to prevent APC activation. Can also bind directly to the APC to inhibit substrate-binding. Required to arrest unfertilized eggs at metaphase of meiosis II, by preventing their release from metaphase of meiosis II, through inhibition of APC-dependent cyclin B destruction leading to stabilization of cyclin B-cdk1 complex activity.</text>
</comment>
<comment type="pathway">
    <text>Protein modification; protein ubiquitination.</text>
</comment>
<comment type="subunit">
    <text evidence="1 2">Part of a SCF (SKP1-cullin-F-box) protein ligase complex (By similarity). Interacts with btrc. Interacts with skp1. Interacts with cdc20. Interacts with pin1; stabilizes fbxo5 by preventing its association with btrc in an isomerization-dependent pathway; this interaction is present during G2 phase and prevents fbxo5 degradation. Interacts with plk1 (By similarity).</text>
</comment>
<comment type="subcellular location">
    <subcellularLocation>
        <location evidence="1">Nucleus</location>
    </subcellularLocation>
    <subcellularLocation>
        <location evidence="1">Cytoplasm</location>
    </subcellularLocation>
    <subcellularLocation>
        <location evidence="1">Cytoplasm</location>
        <location evidence="1">Cytoskeleton</location>
        <location evidence="1">Spindle</location>
    </subcellularLocation>
    <subcellularLocation>
        <location evidence="1">Cytoplasm</location>
        <location evidence="1">Cytoskeleton</location>
        <location evidence="1">Microtubule organizing center</location>
        <location evidence="1">Centrosome</location>
    </subcellularLocation>
    <text evidence="1">In interphase, localizes in a punctate manner in the nucleus and cytoplasm with some perinuclear concentration. In mitotic cells, localizes throughout the cell, particularly at the spindle. At metaphase, localized at mitotic centrosomes. Decreases centrosome localization as cells progressed through telophase.</text>
</comment>
<comment type="domain">
    <text evidence="1">The C-terminal region is required for APC inhibition.</text>
</comment>
<comment type="PTM">
    <text evidence="1">Proteolysed; proteolysis is induced by both cyclin B-cdk1 and cyclin A-cdk1/2 complex through probable phosphorylation. Proteolysis is inhibited by pin1 during G2.</text>
</comment>
<gene>
    <name evidence="7" type="primary">fbxo5</name>
    <name type="ORF">TEgg046m03.1</name>
</gene>
<protein>
    <recommendedName>
        <fullName evidence="6">F-box only protein 5</fullName>
    </recommendedName>
</protein>
<evidence type="ECO:0000250" key="1">
    <source>
        <dbReference type="UniProtKB" id="Q90Z80"/>
    </source>
</evidence>
<evidence type="ECO:0000250" key="2">
    <source>
        <dbReference type="UniProtKB" id="Q9UKT4"/>
    </source>
</evidence>
<evidence type="ECO:0000255" key="3"/>
<evidence type="ECO:0000255" key="4">
    <source>
        <dbReference type="PROSITE-ProRule" id="PRU01220"/>
    </source>
</evidence>
<evidence type="ECO:0000256" key="5">
    <source>
        <dbReference type="SAM" id="MobiDB-lite"/>
    </source>
</evidence>
<evidence type="ECO:0000305" key="6"/>
<evidence type="ECO:0000312" key="7">
    <source>
        <dbReference type="EMBL" id="CAJ81361.1"/>
    </source>
</evidence>
<organism>
    <name type="scientific">Xenopus tropicalis</name>
    <name type="common">Western clawed frog</name>
    <name type="synonym">Silurana tropicalis</name>
    <dbReference type="NCBI Taxonomy" id="8364"/>
    <lineage>
        <taxon>Eukaryota</taxon>
        <taxon>Metazoa</taxon>
        <taxon>Chordata</taxon>
        <taxon>Craniata</taxon>
        <taxon>Vertebrata</taxon>
        <taxon>Euteleostomi</taxon>
        <taxon>Amphibia</taxon>
        <taxon>Batrachia</taxon>
        <taxon>Anura</taxon>
        <taxon>Pipoidea</taxon>
        <taxon>Pipidae</taxon>
        <taxon>Xenopodinae</taxon>
        <taxon>Xenopus</taxon>
        <taxon>Silurana</taxon>
    </lineage>
</organism>
<sequence>MMCGFTSNQSPKKLSSKKLSATNVHLEISPVKCDSPCKGYENVQASYLDTANCTTVTRGADIKDDLPLHNKENLLHRFGDLETHSDEEYSGLQDSGYSSILQNDSPCQDETDNNVSDIQLRETPKNFVQFQKPLHTLSTKNLPALRFEEAMCSTLKKMRKTSKKIDWNAVDDVVCGGNYGLENLIGKNMGLERFDILAELFHRDFKHLLTKILRHLSAMDLINVISVSTTWRKILQKDNSAYNSYKLGCKELCEKKAKVSAHTATRDESLCRVPLASVQKVAASSLCTSKKQSKNRGLSNNRHAEFIEVAQTLKNDQCLKVCVDCSSPAKYDPYLHRATCTRESCKFDFCTLCSCKYHGSKCCQTSKPRSYRVPSEPLPGSKKSKQNLRRL</sequence>
<proteinExistence type="evidence at transcript level"/>
<keyword id="KW-0131">Cell cycle</keyword>
<keyword id="KW-0132">Cell division</keyword>
<keyword id="KW-0963">Cytoplasm</keyword>
<keyword id="KW-0206">Cytoskeleton</keyword>
<keyword id="KW-0479">Metal-binding</keyword>
<keyword id="KW-0498">Mitosis</keyword>
<keyword id="KW-0539">Nucleus</keyword>
<keyword id="KW-1185">Reference proteome</keyword>
<keyword id="KW-0833">Ubl conjugation pathway</keyword>
<keyword id="KW-0862">Zinc</keyword>
<keyword id="KW-0863">Zinc-finger</keyword>